<dbReference type="EC" id="7.6.2.2"/>
<dbReference type="EMBL" id="AE016826">
    <property type="protein sequence ID" value="AAO27133.1"/>
    <property type="molecule type" value="Genomic_DNA"/>
</dbReference>
<dbReference type="RefSeq" id="WP_011091534.1">
    <property type="nucleotide sequence ID" value="NC_004545.1"/>
</dbReference>
<dbReference type="SMR" id="Q89A97"/>
<dbReference type="STRING" id="224915.bbp_423"/>
<dbReference type="KEGG" id="bab:bbp_423"/>
<dbReference type="eggNOG" id="COG1132">
    <property type="taxonomic scope" value="Bacteria"/>
</dbReference>
<dbReference type="HOGENOM" id="CLU_000604_84_6_6"/>
<dbReference type="OrthoDB" id="9806127at2"/>
<dbReference type="Proteomes" id="UP000000601">
    <property type="component" value="Chromosome"/>
</dbReference>
<dbReference type="GO" id="GO:0005886">
    <property type="term" value="C:plasma membrane"/>
    <property type="evidence" value="ECO:0007669"/>
    <property type="project" value="UniProtKB-SubCell"/>
</dbReference>
<dbReference type="GO" id="GO:0015421">
    <property type="term" value="F:ABC-type oligopeptide transporter activity"/>
    <property type="evidence" value="ECO:0007669"/>
    <property type="project" value="TreeGrafter"/>
</dbReference>
<dbReference type="GO" id="GO:0008559">
    <property type="term" value="F:ABC-type xenobiotic transporter activity"/>
    <property type="evidence" value="ECO:0007669"/>
    <property type="project" value="UniProtKB-EC"/>
</dbReference>
<dbReference type="GO" id="GO:0005524">
    <property type="term" value="F:ATP binding"/>
    <property type="evidence" value="ECO:0007669"/>
    <property type="project" value="UniProtKB-KW"/>
</dbReference>
<dbReference type="GO" id="GO:0016887">
    <property type="term" value="F:ATP hydrolysis activity"/>
    <property type="evidence" value="ECO:0007669"/>
    <property type="project" value="InterPro"/>
</dbReference>
<dbReference type="CDD" id="cd18541">
    <property type="entry name" value="ABC_6TM_TmrB_like"/>
    <property type="match status" value="1"/>
</dbReference>
<dbReference type="FunFam" id="1.20.1560.10:FF:000011">
    <property type="entry name" value="Multidrug ABC transporter ATP-binding protein"/>
    <property type="match status" value="1"/>
</dbReference>
<dbReference type="FunFam" id="3.40.50.300:FF:000221">
    <property type="entry name" value="Multidrug ABC transporter ATP-binding protein"/>
    <property type="match status" value="1"/>
</dbReference>
<dbReference type="Gene3D" id="1.20.1560.10">
    <property type="entry name" value="ABC transporter type 1, transmembrane domain"/>
    <property type="match status" value="1"/>
</dbReference>
<dbReference type="Gene3D" id="3.40.50.300">
    <property type="entry name" value="P-loop containing nucleotide triphosphate hydrolases"/>
    <property type="match status" value="1"/>
</dbReference>
<dbReference type="InterPro" id="IPR003593">
    <property type="entry name" value="AAA+_ATPase"/>
</dbReference>
<dbReference type="InterPro" id="IPR011527">
    <property type="entry name" value="ABC1_TM_dom"/>
</dbReference>
<dbReference type="InterPro" id="IPR036640">
    <property type="entry name" value="ABC1_TM_sf"/>
</dbReference>
<dbReference type="InterPro" id="IPR003439">
    <property type="entry name" value="ABC_transporter-like_ATP-bd"/>
</dbReference>
<dbReference type="InterPro" id="IPR017871">
    <property type="entry name" value="ABC_transporter-like_CS"/>
</dbReference>
<dbReference type="InterPro" id="IPR027417">
    <property type="entry name" value="P-loop_NTPase"/>
</dbReference>
<dbReference type="InterPro" id="IPR039421">
    <property type="entry name" value="Type_1_exporter"/>
</dbReference>
<dbReference type="PANTHER" id="PTHR43394:SF1">
    <property type="entry name" value="ATP-BINDING CASSETTE SUB-FAMILY B MEMBER 10, MITOCHONDRIAL"/>
    <property type="match status" value="1"/>
</dbReference>
<dbReference type="PANTHER" id="PTHR43394">
    <property type="entry name" value="ATP-DEPENDENT PERMEASE MDL1, MITOCHONDRIAL"/>
    <property type="match status" value="1"/>
</dbReference>
<dbReference type="Pfam" id="PF00664">
    <property type="entry name" value="ABC_membrane"/>
    <property type="match status" value="1"/>
</dbReference>
<dbReference type="Pfam" id="PF00005">
    <property type="entry name" value="ABC_tran"/>
    <property type="match status" value="1"/>
</dbReference>
<dbReference type="SMART" id="SM00382">
    <property type="entry name" value="AAA"/>
    <property type="match status" value="1"/>
</dbReference>
<dbReference type="SUPFAM" id="SSF90123">
    <property type="entry name" value="ABC transporter transmembrane region"/>
    <property type="match status" value="1"/>
</dbReference>
<dbReference type="SUPFAM" id="SSF52540">
    <property type="entry name" value="P-loop containing nucleoside triphosphate hydrolases"/>
    <property type="match status" value="1"/>
</dbReference>
<dbReference type="PROSITE" id="PS50929">
    <property type="entry name" value="ABC_TM1F"/>
    <property type="match status" value="1"/>
</dbReference>
<dbReference type="PROSITE" id="PS00211">
    <property type="entry name" value="ABC_TRANSPORTER_1"/>
    <property type="match status" value="1"/>
</dbReference>
<dbReference type="PROSITE" id="PS50893">
    <property type="entry name" value="ABC_TRANSPORTER_2"/>
    <property type="match status" value="1"/>
</dbReference>
<evidence type="ECO:0000255" key="1">
    <source>
        <dbReference type="PROSITE-ProRule" id="PRU00434"/>
    </source>
</evidence>
<evidence type="ECO:0000255" key="2">
    <source>
        <dbReference type="PROSITE-ProRule" id="PRU00441"/>
    </source>
</evidence>
<evidence type="ECO:0000305" key="3"/>
<comment type="catalytic activity">
    <reaction>
        <text>ATP + H2O + xenobioticSide 1 = ADP + phosphate + xenobioticSide 2.</text>
        <dbReference type="EC" id="7.6.2.2"/>
    </reaction>
</comment>
<comment type="subcellular location">
    <subcellularLocation>
        <location evidence="3">Cell membrane</location>
        <topology evidence="2">Multi-pass membrane protein</topology>
    </subcellularLocation>
</comment>
<comment type="similarity">
    <text evidence="3">Belongs to the ABC transporter superfamily. Drug exporter-2 (TC 3.A.1.117) family.</text>
</comment>
<sequence>MQLLKQLKWYFIQEYKNYTIAIFLLISISILQLYPPKLIGMLIDISIRKQTQKAPILPLILIILFISIIIYILRYMWRLFLFGASYKLAIKLRIEIYNYLCQQKNDFYLKHKTGDLIARITNDVDKVVFAAGEGVLTLVDSLIMGVSVIIVMITQISWKLTIISLIPMPIMAIIIKRFGKKLYSSYHDAQTTFSHLNNYAQENLNNIHMIKAFGLENYYSKKFLKIAHKTRKKNIKIAKIDSKFNPIIHLFISISHLLAITIGSYMITYNEISTGELMSFILYLGLIIWPMLAFAWMFNIIERGSASWDRIKSMINNNLFIHKKKYKNISNIPGILEVKINYFKYSKSNKTILKNINFKIRPGQILGICGPTGSGKSTLLKLIQRQIELYDGKISYHSIPITQFNIVEWRKKMSIVNQTTFLFSDTIANNIKLGKPYASQKEIEQATTFSDLHNDIMTFPQGYNTQVGERGIMLSGGQKQRISIARALLLKSEILILDNALSSVDNKTEINILENLKTWKKNKNTIIMCTHRLSSLINSDLIIVIENGSITQIGKHKLLIQNLKQWYGKTYLHQKLSNH</sequence>
<keyword id="KW-0067">ATP-binding</keyword>
<keyword id="KW-1003">Cell membrane</keyword>
<keyword id="KW-0472">Membrane</keyword>
<keyword id="KW-0547">Nucleotide-binding</keyword>
<keyword id="KW-1185">Reference proteome</keyword>
<keyword id="KW-1278">Translocase</keyword>
<keyword id="KW-0812">Transmembrane</keyword>
<keyword id="KW-1133">Transmembrane helix</keyword>
<keyword id="KW-0813">Transport</keyword>
<reference key="1">
    <citation type="journal article" date="2003" name="Proc. Natl. Acad. Sci. U.S.A.">
        <title>Reductive genome evolution in Buchnera aphidicola.</title>
        <authorList>
            <person name="van Ham R.C.H.J."/>
            <person name="Kamerbeek J."/>
            <person name="Palacios C."/>
            <person name="Rausell C."/>
            <person name="Abascal F."/>
            <person name="Bastolla U."/>
            <person name="Fernandez J.M."/>
            <person name="Jimenez L."/>
            <person name="Postigo M."/>
            <person name="Silva F.J."/>
            <person name="Tamames J."/>
            <person name="Viguera E."/>
            <person name="Latorre A."/>
            <person name="Valencia A."/>
            <person name="Moran F."/>
            <person name="Moya A."/>
        </authorList>
    </citation>
    <scope>NUCLEOTIDE SEQUENCE [LARGE SCALE GENOMIC DNA]</scope>
    <source>
        <strain>Bp</strain>
    </source>
</reference>
<accession>Q89A97</accession>
<proteinExistence type="inferred from homology"/>
<gene>
    <name type="primary">mdlA</name>
    <name type="ordered locus">bbp_423</name>
</gene>
<protein>
    <recommendedName>
        <fullName>Multidrug resistance-like ATP-binding protein MdlA</fullName>
        <ecNumber>7.6.2.2</ecNumber>
    </recommendedName>
</protein>
<name>MDLA_BUCBP</name>
<feature type="chain" id="PRO_0000092495" description="Multidrug resistance-like ATP-binding protein MdlA">
    <location>
        <begin position="1"/>
        <end position="579"/>
    </location>
</feature>
<feature type="transmembrane region" description="Helical" evidence="2">
    <location>
        <begin position="20"/>
        <end position="40"/>
    </location>
</feature>
<feature type="transmembrane region" description="Helical" evidence="2">
    <location>
        <begin position="53"/>
        <end position="73"/>
    </location>
</feature>
<feature type="transmembrane region" description="Helical" evidence="2">
    <location>
        <begin position="134"/>
        <end position="154"/>
    </location>
</feature>
<feature type="transmembrane region" description="Helical" evidence="2">
    <location>
        <begin position="155"/>
        <end position="175"/>
    </location>
</feature>
<feature type="transmembrane region" description="Helical" evidence="2">
    <location>
        <begin position="247"/>
        <end position="267"/>
    </location>
</feature>
<feature type="transmembrane region" description="Helical" evidence="2">
    <location>
        <begin position="281"/>
        <end position="301"/>
    </location>
</feature>
<feature type="domain" description="ABC transmembrane type-1" evidence="2">
    <location>
        <begin position="18"/>
        <end position="303"/>
    </location>
</feature>
<feature type="domain" description="ABC transporter" evidence="1">
    <location>
        <begin position="338"/>
        <end position="572"/>
    </location>
</feature>
<feature type="binding site" evidence="1">
    <location>
        <begin position="370"/>
        <end position="377"/>
    </location>
    <ligand>
        <name>ATP</name>
        <dbReference type="ChEBI" id="CHEBI:30616"/>
    </ligand>
</feature>
<organism>
    <name type="scientific">Buchnera aphidicola subsp. Baizongia pistaciae (strain Bp)</name>
    <dbReference type="NCBI Taxonomy" id="224915"/>
    <lineage>
        <taxon>Bacteria</taxon>
        <taxon>Pseudomonadati</taxon>
        <taxon>Pseudomonadota</taxon>
        <taxon>Gammaproteobacteria</taxon>
        <taxon>Enterobacterales</taxon>
        <taxon>Erwiniaceae</taxon>
        <taxon>Buchnera</taxon>
    </lineage>
</organism>